<organism>
    <name type="scientific">Micrarchaeota archaeon (strain CG1_02_47_40)</name>
    <dbReference type="NCBI Taxonomy" id="1805247"/>
    <lineage>
        <taxon>Archaea</taxon>
        <taxon>Candidatus Micrarchaeota</taxon>
    </lineage>
</organism>
<comment type="function">
    <text evidence="1 3 6 7">CRISPR (clustered regularly interspaced short palindromic repeat), is an adaptive immune system that provides protection against mobile genetic elements (viruses, transposable elements and conjugative plasmids). CRISPR clusters contain sequences complementary to antecedent mobile elements and target invading nucleic acids (Probable). CRISPR clusters are transcribed and processed into CRISPR RNA (crRNA), which requires a trans-encoded small RNA (tracrRNA), but not this protein (in vitro) (By similarity). Recognizes a short motif in the CRISPR repeat sequences (the 5' PAM or protospacer adjacent motif, TTAT in this organism) to help distinguish self versus nonself, as targets within the CRISPR locus do not have PAMs (PubMed:32246713). Upon expression in E.coli of this protein, a mini CRISPR array and the probable tracrRNA, has dsDNA endonuclease activity. DNA cleavage is centered around positions 21 base pairs 3' of PAM. The mini system does not protect E.coli against transformation by foreign plasmids (PubMed:32246713).</text>
</comment>
<comment type="cofactor">
    <cofactor evidence="1">
        <name>Mg(2+)</name>
        <dbReference type="ChEBI" id="CHEBI:18420"/>
    </cofactor>
    <text evidence="1">Mg(2+) is required for dsDNA cleavage.</text>
</comment>
<comment type="cofactor">
    <cofactor evidence="1">
        <name>Zn(2+)</name>
        <dbReference type="ChEBI" id="CHEBI:29105"/>
    </cofactor>
</comment>
<comment type="subunit">
    <text evidence="1">An asymmetric homodimer. Guide RNA is probably required for dimerization.</text>
</comment>
<comment type="domain">
    <text evidence="1">Has an asymmetric bilobed structure, with a recognition (REC) lobe and nuclease (NUC) lobe; the sgRNA:target DNA is bound between the 2 lobes. The REC lobe (residues 1-312) is formed by the WED, ZF and REC domains, while the NUC lobe (residues 321-529) is formed by the RuvC and TNB domains. Has a split RuvC-like domain with the nuclease active sites.</text>
</comment>
<comment type="miscellaneous">
    <text evidence="6">Part of a type V-F CRISPR-Cas system.</text>
</comment>
<comment type="similarity">
    <text evidence="6">Belongs to the CRISPR-associated endonuclease Cas12f family.</text>
</comment>
<reference evidence="8" key="1">
    <citation type="journal article" date="2016" name="Environ. Microbiol.">
        <title>Genomic resolution of a cold subsurface aquifer community provides metabolic insights for novel microbes adapted to high CO concentrations.</title>
        <authorList>
            <person name="Probst A.J."/>
            <person name="Castelle C.J."/>
            <person name="Singh A."/>
            <person name="Brown C.T."/>
            <person name="Anantharaman K."/>
            <person name="Sharon I."/>
            <person name="Hug L.A."/>
            <person name="Burstein D."/>
            <person name="Emerson J.B."/>
            <person name="Thomas B.C."/>
            <person name="Banfield J.F."/>
        </authorList>
    </citation>
    <scope>NUCLEOTIDE SEQUENCE [LARGE SCALE GENOMIC DNA]</scope>
    <source>
        <strain>CG1_02_47_40</strain>
    </source>
</reference>
<reference key="2">
    <citation type="journal article" date="2018" name="Science">
        <title>Programmed DNA destruction by miniature CRISPR-Cas14 enzymes.</title>
        <authorList>
            <person name="Harrington L.B."/>
            <person name="Burstein D."/>
            <person name="Chen J.S."/>
            <person name="Paez-Espino D."/>
            <person name="Ma E."/>
            <person name="Witte I.P."/>
            <person name="Cofsky J.C."/>
            <person name="Kyrpides N.C."/>
            <person name="Banfield J.F."/>
            <person name="Doudna J.A."/>
        </authorList>
    </citation>
    <scope>IDENTIFICATION</scope>
</reference>
<reference key="3">
    <citation type="journal article" date="2020" name="Nucleic Acids Res.">
        <title>PAM recognition by miniature CRISPR-Cas12f nucleases triggers programmable double-stranded DNA target cleavage.</title>
        <authorList>
            <person name="Karvelis T."/>
            <person name="Bigelyte G."/>
            <person name="Young J.K."/>
            <person name="Hou Z."/>
            <person name="Zedaveinyte R."/>
            <person name="Budre K."/>
            <person name="Paulraj S."/>
            <person name="Djukanovic V."/>
            <person name="Gasior S."/>
            <person name="Silanskas A."/>
            <person name="Venclovas C."/>
            <person name="Siksnys V."/>
        </authorList>
    </citation>
    <scope>FUNCTION</scope>
    <scope>CATALYTIC ACTIVITY</scope>
    <scope>RNA-BINDING</scope>
    <source>
        <strain>CG1_02_47_40</strain>
    </source>
</reference>
<name>CS12F_MICX1</name>
<protein>
    <recommendedName>
        <fullName evidence="5">CRISPR-associated endodeoxyribonuclease Cas12f2</fullName>
        <shortName evidence="5">Mi1Cas12f2</shortName>
        <ecNumber evidence="2">3.1.-.-</ecNumber>
    </recommendedName>
    <alternativeName>
        <fullName evidence="4">CRISPR-associated endodeoxyribonuclease Cas14b4</fullName>
    </alternativeName>
</protein>
<dbReference type="EC" id="3.1.-.-" evidence="2"/>
<dbReference type="EMBL" id="MNVE01000014">
    <property type="protein sequence ID" value="OIO21000.1"/>
    <property type="molecule type" value="Genomic_DNA"/>
</dbReference>
<dbReference type="STRING" id="1805247.AUJ17_04235"/>
<dbReference type="Proteomes" id="UP000183913">
    <property type="component" value="Unassembled WGS sequence"/>
</dbReference>
<dbReference type="GO" id="GO:0003677">
    <property type="term" value="F:DNA binding"/>
    <property type="evidence" value="ECO:0007669"/>
    <property type="project" value="UniProtKB-KW"/>
</dbReference>
<dbReference type="GO" id="GO:0004519">
    <property type="term" value="F:endonuclease activity"/>
    <property type="evidence" value="ECO:0007669"/>
    <property type="project" value="UniProtKB-KW"/>
</dbReference>
<dbReference type="GO" id="GO:0046872">
    <property type="term" value="F:metal ion binding"/>
    <property type="evidence" value="ECO:0007669"/>
    <property type="project" value="UniProtKB-KW"/>
</dbReference>
<dbReference type="GO" id="GO:0003723">
    <property type="term" value="F:RNA binding"/>
    <property type="evidence" value="ECO:0007669"/>
    <property type="project" value="UniProtKB-KW"/>
</dbReference>
<dbReference type="InterPro" id="IPR010095">
    <property type="entry name" value="Cas12f1-like_TNB"/>
</dbReference>
<dbReference type="InterPro" id="IPR051399">
    <property type="entry name" value="RNA-guided_DNA_endo/Transpos"/>
</dbReference>
<dbReference type="NCBIfam" id="TIGR01766">
    <property type="entry name" value="IS200/IS605 family accessory protein TnpB-like domain"/>
    <property type="match status" value="1"/>
</dbReference>
<dbReference type="PANTHER" id="PTHR30405:SF11">
    <property type="entry name" value="RNA-GUIDED DNA ENDONUCLEASE RV2885C-RELATED"/>
    <property type="match status" value="1"/>
</dbReference>
<dbReference type="PANTHER" id="PTHR30405">
    <property type="entry name" value="TRANSPOSASE"/>
    <property type="match status" value="1"/>
</dbReference>
<dbReference type="Pfam" id="PF07282">
    <property type="entry name" value="Cas12f1-like_TNB"/>
    <property type="match status" value="1"/>
</dbReference>
<keyword id="KW-0238">DNA-binding</keyword>
<keyword id="KW-0255">Endonuclease</keyword>
<keyword id="KW-0378">Hydrolase</keyword>
<keyword id="KW-0479">Metal-binding</keyword>
<keyword id="KW-0540">Nuclease</keyword>
<keyword id="KW-0694">RNA-binding</keyword>
<keyword id="KW-0862">Zinc</keyword>
<gene>
    <name evidence="5" type="primary">cas12f2</name>
    <name evidence="4" type="synonym">cas14b4</name>
    <name evidence="8" type="ORF">AUJ17_04235</name>
</gene>
<sequence length="544" mass="63904">MNMSKTTISVKLKIIDLSSEKKEFLDNYFNEYAKATTFCQLRIRRLLRNTHWLGKKEKSSKKWIFESGICDLCGENKELVNEDRNSGEPAKICKRCYNGRYGNQMIRKLFVSTKKREVQENMDIRRVAKLNNTHYHRIPEEAFDMIKAADTAEKRRKKNVEYDKKRQMEFIEMFNDEKKRAARPKKPNERETRYVHISKLESPSKGYTLNGIKRKIDGMGKKIERAEKGLSRKKIFGYQGNRIKLDSNWVRFDLAESEITIPSLFKEMKLRITGPTNVHSKSGQIYFAEWFERINKQPNNYCYLIRKTSSNGKYEYYLQYTYEAEVEANKEYAGCLGVDIGCSKLAAAVYYDSKNKKAQKPIEIFTNPIKKIKMRREKLIKLLSRVKVRHRRRKLMQLSKTEPIIDYTCHKTARKIVEMANTAKAFISMENLETGIKQKQQARETKKQKFYRNMFLFRKLSKLIEYKALLKGIKIVYVKPDYTSQTCSSCGADKEKTERPSQAIFRCLNPTCRYYQRDINADFNAAVNIAKKALNNTEVVTTLL</sequence>
<evidence type="ECO:0000250" key="1">
    <source>
        <dbReference type="UniProtKB" id="A0A482D308"/>
    </source>
</evidence>
<evidence type="ECO:0000269" key="2">
    <source>
    </source>
</evidence>
<evidence type="ECO:0000269" key="3">
    <source>
    </source>
</evidence>
<evidence type="ECO:0000303" key="4">
    <source>
    </source>
</evidence>
<evidence type="ECO:0000303" key="5">
    <source>
    </source>
</evidence>
<evidence type="ECO:0000305" key="6">
    <source>
    </source>
</evidence>
<evidence type="ECO:0000305" key="7">
    <source>
    </source>
</evidence>
<evidence type="ECO:0000312" key="8">
    <source>
        <dbReference type="EMBL" id="OIO21000.1"/>
    </source>
</evidence>
<accession>A0A1J4UAV9</accession>
<proteinExistence type="evidence at protein level"/>
<feature type="chain" id="PRO_0000457913" description="CRISPR-associated endodeoxyribonuclease Cas12f2">
    <location>
        <begin position="1"/>
        <end position="544"/>
    </location>
</feature>
<feature type="region of interest" description="Recognition domain (REC)" evidence="1">
    <location>
        <begin position="1"/>
        <end position="195"/>
    </location>
</feature>
<feature type="region of interest" description="Wedge domain (WED)" evidence="1">
    <location>
        <begin position="196"/>
        <end position="326"/>
    </location>
</feature>
<feature type="region of interest" description="Linker" evidence="1">
    <location>
        <begin position="327"/>
        <end position="334"/>
    </location>
</feature>
<feature type="region of interest" description="RuvC-I" evidence="1">
    <location>
        <begin position="335"/>
        <end position="485"/>
    </location>
</feature>
<feature type="region of interest" description="Target nucleic acid-binding (TNB)" evidence="1">
    <location>
        <begin position="486"/>
        <end position="520"/>
    </location>
</feature>
<feature type="region of interest" description="RuvC-II" evidence="1">
    <location>
        <begin position="521"/>
        <end position="541"/>
    </location>
</feature>
<feature type="active site" evidence="1">
    <location>
        <position position="339"/>
    </location>
</feature>
<feature type="active site" evidence="1">
    <location>
        <position position="430"/>
    </location>
</feature>
<feature type="active site" evidence="1">
    <location>
        <position position="522"/>
    </location>
</feature>
<feature type="binding site" evidence="1">
    <location>
        <position position="487"/>
    </location>
    <ligand>
        <name>Zn(2+)</name>
        <dbReference type="ChEBI" id="CHEBI:29105"/>
    </ligand>
</feature>
<feature type="binding site" evidence="1">
    <location>
        <position position="490"/>
    </location>
    <ligand>
        <name>Zn(2+)</name>
        <dbReference type="ChEBI" id="CHEBI:29105"/>
    </ligand>
</feature>
<feature type="binding site" evidence="1">
    <location>
        <position position="507"/>
    </location>
    <ligand>
        <name>Zn(2+)</name>
        <dbReference type="ChEBI" id="CHEBI:29105"/>
    </ligand>
</feature>
<feature type="binding site" evidence="1">
    <location>
        <position position="512"/>
    </location>
    <ligand>
        <name>Zn(2+)</name>
        <dbReference type="ChEBI" id="CHEBI:29105"/>
    </ligand>
</feature>